<sequence length="189" mass="21688">MSSLSLYTVQAVLILDQQGERIYAKYYQPPHRSDEGHQLLFNSVKKQKEFEKQLYRKTHKQDSEILIFEDHLVLYKEYIDITIYLVASLEENEIVLQQGFSAIRGALDLILNSGMDKKNIQENYDMVLLAIDETIDNGVILETDSNTIASRVSKPPTNEPQMALDLDKGFLGAWGFAKSKFQERLQQGL</sequence>
<keyword id="KW-0963">Cytoplasm</keyword>
<keyword id="KW-0968">Cytoplasmic vesicle</keyword>
<keyword id="KW-0931">ER-Golgi transport</keyword>
<keyword id="KW-0333">Golgi apparatus</keyword>
<keyword id="KW-0472">Membrane</keyword>
<keyword id="KW-0653">Protein transport</keyword>
<keyword id="KW-1185">Reference proteome</keyword>
<keyword id="KW-0813">Transport</keyword>
<name>COPZ_YEAST</name>
<gene>
    <name type="primary">RET3</name>
    <name type="ordered locus">YPL010W</name>
    <name type="ORF">LPA7W</name>
    <name type="ORF">YP8132.03</name>
</gene>
<dbReference type="EMBL" id="U33335">
    <property type="protein sequence ID" value="AAB68095.1"/>
    <property type="molecule type" value="Genomic_DNA"/>
</dbReference>
<dbReference type="EMBL" id="Z71255">
    <property type="protein sequence ID" value="CAA95031.1"/>
    <property type="molecule type" value="Genomic_DNA"/>
</dbReference>
<dbReference type="EMBL" id="Z48483">
    <property type="protein sequence ID" value="CAA88376.1"/>
    <property type="molecule type" value="Genomic_DNA"/>
</dbReference>
<dbReference type="EMBL" id="AY558438">
    <property type="protein sequence ID" value="AAS56764.1"/>
    <property type="molecule type" value="Genomic_DNA"/>
</dbReference>
<dbReference type="EMBL" id="BK006949">
    <property type="protein sequence ID" value="DAA11418.1"/>
    <property type="molecule type" value="Genomic_DNA"/>
</dbReference>
<dbReference type="PIR" id="S52521">
    <property type="entry name" value="S52521"/>
</dbReference>
<dbReference type="RefSeq" id="NP_015315.1">
    <property type="nucleotide sequence ID" value="NM_001183824.1"/>
</dbReference>
<dbReference type="SMR" id="P53600"/>
<dbReference type="BioGRID" id="36167">
    <property type="interactions" value="249"/>
</dbReference>
<dbReference type="ComplexPortal" id="CPX-1652">
    <property type="entry name" value="COPI vesicle coat complex"/>
</dbReference>
<dbReference type="DIP" id="DIP-6809N"/>
<dbReference type="FunCoup" id="P53600">
    <property type="interactions" value="614"/>
</dbReference>
<dbReference type="IntAct" id="P53600">
    <property type="interactions" value="14"/>
</dbReference>
<dbReference type="MINT" id="P53600"/>
<dbReference type="STRING" id="4932.YPL010W"/>
<dbReference type="iPTMnet" id="P53600"/>
<dbReference type="PaxDb" id="4932-YPL010W"/>
<dbReference type="PeptideAtlas" id="P53600"/>
<dbReference type="EnsemblFungi" id="YPL010W_mRNA">
    <property type="protein sequence ID" value="YPL010W"/>
    <property type="gene ID" value="YPL010W"/>
</dbReference>
<dbReference type="GeneID" id="856097"/>
<dbReference type="KEGG" id="sce:YPL010W"/>
<dbReference type="AGR" id="SGD:S000005931"/>
<dbReference type="SGD" id="S000005931">
    <property type="gene designation" value="RET3"/>
</dbReference>
<dbReference type="VEuPathDB" id="FungiDB:YPL010W"/>
<dbReference type="eggNOG" id="KOG3343">
    <property type="taxonomic scope" value="Eukaryota"/>
</dbReference>
<dbReference type="GeneTree" id="ENSGT00390000004405"/>
<dbReference type="HOGENOM" id="CLU_086803_0_0_1"/>
<dbReference type="InParanoid" id="P53600"/>
<dbReference type="OMA" id="NELMLHS"/>
<dbReference type="OrthoDB" id="10249988at2759"/>
<dbReference type="BioCyc" id="YEAST:G3O-33929-MONOMER"/>
<dbReference type="Reactome" id="R-SCE-6807878">
    <property type="pathway name" value="COPI-mediated anterograde transport"/>
</dbReference>
<dbReference type="Reactome" id="R-SCE-6811434">
    <property type="pathway name" value="COPI-dependent Golgi-to-ER retrograde traffic"/>
</dbReference>
<dbReference type="BioGRID-ORCS" id="856097">
    <property type="hits" value="3 hits in 10 CRISPR screens"/>
</dbReference>
<dbReference type="PRO" id="PR:P53600"/>
<dbReference type="Proteomes" id="UP000002311">
    <property type="component" value="Chromosome XVI"/>
</dbReference>
<dbReference type="RNAct" id="P53600">
    <property type="molecule type" value="protein"/>
</dbReference>
<dbReference type="GO" id="GO:0030126">
    <property type="term" value="C:COPI vesicle coat"/>
    <property type="evidence" value="ECO:0000314"/>
    <property type="project" value="SGD"/>
</dbReference>
<dbReference type="GO" id="GO:0000139">
    <property type="term" value="C:Golgi membrane"/>
    <property type="evidence" value="ECO:0007669"/>
    <property type="project" value="UniProtKB-SubCell"/>
</dbReference>
<dbReference type="GO" id="GO:0006891">
    <property type="term" value="P:intra-Golgi vesicle-mediated transport"/>
    <property type="evidence" value="ECO:0000318"/>
    <property type="project" value="GO_Central"/>
</dbReference>
<dbReference type="GO" id="GO:0006886">
    <property type="term" value="P:intracellular protein transport"/>
    <property type="evidence" value="ECO:0000318"/>
    <property type="project" value="GO_Central"/>
</dbReference>
<dbReference type="GO" id="GO:0006890">
    <property type="term" value="P:retrograde vesicle-mediated transport, Golgi to endoplasmic reticulum"/>
    <property type="evidence" value="ECO:0000315"/>
    <property type="project" value="SGD"/>
</dbReference>
<dbReference type="CDD" id="cd14829">
    <property type="entry name" value="Zeta-COP"/>
    <property type="match status" value="1"/>
</dbReference>
<dbReference type="FunFam" id="3.30.450.60:FF:000013">
    <property type="entry name" value="Coatomer subunit zeta"/>
    <property type="match status" value="1"/>
</dbReference>
<dbReference type="Gene3D" id="3.30.450.60">
    <property type="match status" value="1"/>
</dbReference>
<dbReference type="InterPro" id="IPR022775">
    <property type="entry name" value="AP_mu_sigma_su"/>
</dbReference>
<dbReference type="InterPro" id="IPR039652">
    <property type="entry name" value="Coatomer_zeta"/>
</dbReference>
<dbReference type="InterPro" id="IPR011012">
    <property type="entry name" value="Longin-like_dom_sf"/>
</dbReference>
<dbReference type="PANTHER" id="PTHR11043:SF0">
    <property type="entry name" value="COATOMER SUBUNIT ZETA"/>
    <property type="match status" value="1"/>
</dbReference>
<dbReference type="PANTHER" id="PTHR11043">
    <property type="entry name" value="ZETA-COAT PROTEIN"/>
    <property type="match status" value="1"/>
</dbReference>
<dbReference type="Pfam" id="PF01217">
    <property type="entry name" value="Clat_adaptor_s"/>
    <property type="match status" value="1"/>
</dbReference>
<dbReference type="SUPFAM" id="SSF64356">
    <property type="entry name" value="SNARE-like"/>
    <property type="match status" value="1"/>
</dbReference>
<organism>
    <name type="scientific">Saccharomyces cerevisiae (strain ATCC 204508 / S288c)</name>
    <name type="common">Baker's yeast</name>
    <dbReference type="NCBI Taxonomy" id="559292"/>
    <lineage>
        <taxon>Eukaryota</taxon>
        <taxon>Fungi</taxon>
        <taxon>Dikarya</taxon>
        <taxon>Ascomycota</taxon>
        <taxon>Saccharomycotina</taxon>
        <taxon>Saccharomycetes</taxon>
        <taxon>Saccharomycetales</taxon>
        <taxon>Saccharomycetaceae</taxon>
        <taxon>Saccharomyces</taxon>
    </lineage>
</organism>
<accession>P53600</accession>
<accession>D6W402</accession>
<comment type="function">
    <text evidence="2">The coatomer is a cytosolic protein complex that binds to dilysine motifs and reversibly associates with Golgi non-clathrin-coated vesicles, which further mediate biosynthetic protein transport from the ER, via the Golgi up to the trans Golgi network. Coatomer complex is required for budding from Golgi membranes, and is essential for the retrograde Golgi-to-ER transport of dilysine-tagged proteins (PubMed:9058184). The zeta subunit may be involved in regulating the coat assembly and, hence, the rate of biosynthetic protein transport due to its association-dissociation properties with the coatomer complex (PubMed:9058184).</text>
</comment>
<comment type="subunit">
    <text>Oligomeric complex that consists of at least the alpha, beta, beta', gamma, delta, epsilon and zeta subunits.</text>
</comment>
<comment type="interaction">
    <interactant intactId="EBI-4905">
        <id>P53600</id>
    </interactant>
    <interactant intactId="EBI-4876">
        <id>P43621</id>
        <label>RET2</label>
    </interactant>
    <organismsDiffer>false</organismsDiffer>
    <experiments>3</experiments>
</comment>
<comment type="interaction">
    <interactant intactId="EBI-4905">
        <id>P53600</id>
    </interactant>
    <interactant intactId="EBI-4869">
        <id>P41810</id>
        <label>SEC26</label>
    </interactant>
    <organismsDiffer>false</organismsDiffer>
    <experiments>3</experiments>
</comment>
<comment type="interaction">
    <interactant intactId="EBI-4905">
        <id>P53600</id>
    </interactant>
    <interactant intactId="EBI-4898">
        <id>P41811</id>
        <label>SEC27</label>
    </interactant>
    <organismsDiffer>false</organismsDiffer>
    <experiments>3</experiments>
</comment>
<comment type="subcellular location">
    <subcellularLocation>
        <location evidence="1">Cytoplasm</location>
    </subcellularLocation>
    <subcellularLocation>
        <location evidence="1">Golgi apparatus membrane</location>
        <topology evidence="1">Peripheral membrane protein</topology>
        <orientation evidence="1">Cytoplasmic side</orientation>
    </subcellularLocation>
    <subcellularLocation>
        <location evidence="1">Cytoplasmic vesicle</location>
        <location evidence="1">COPI-coated vesicle membrane</location>
        <topology evidence="1">Peripheral membrane protein</topology>
        <orientation evidence="1">Cytoplasmic side</orientation>
    </subcellularLocation>
    <text evidence="1">The coatomer is cytoplasmic or polymerized on the cytoplasmic side of the Golgi, as well as on the vesicles/buds originating from it.</text>
</comment>
<comment type="similarity">
    <text evidence="3">Belongs to the adaptor complexes small subunit family.</text>
</comment>
<reference key="1">
    <citation type="journal article" date="1997" name="Nature">
        <title>The nucleotide sequence of Saccharomyces cerevisiae chromosome XVI.</title>
        <authorList>
            <person name="Bussey H."/>
            <person name="Storms R.K."/>
            <person name="Ahmed A."/>
            <person name="Albermann K."/>
            <person name="Allen E."/>
            <person name="Ansorge W."/>
            <person name="Araujo R."/>
            <person name="Aparicio A."/>
            <person name="Barrell B.G."/>
            <person name="Badcock K."/>
            <person name="Benes V."/>
            <person name="Botstein D."/>
            <person name="Bowman S."/>
            <person name="Brueckner M."/>
            <person name="Carpenter J."/>
            <person name="Cherry J.M."/>
            <person name="Chung E."/>
            <person name="Churcher C.M."/>
            <person name="Coster F."/>
            <person name="Davis K."/>
            <person name="Davis R.W."/>
            <person name="Dietrich F.S."/>
            <person name="Delius H."/>
            <person name="DiPaolo T."/>
            <person name="Dubois E."/>
            <person name="Duesterhoeft A."/>
            <person name="Duncan M."/>
            <person name="Floeth M."/>
            <person name="Fortin N."/>
            <person name="Friesen J.D."/>
            <person name="Fritz C."/>
            <person name="Goffeau A."/>
            <person name="Hall J."/>
            <person name="Hebling U."/>
            <person name="Heumann K."/>
            <person name="Hilbert H."/>
            <person name="Hillier L.W."/>
            <person name="Hunicke-Smith S."/>
            <person name="Hyman R.W."/>
            <person name="Johnston M."/>
            <person name="Kalman S."/>
            <person name="Kleine K."/>
            <person name="Komp C."/>
            <person name="Kurdi O."/>
            <person name="Lashkari D."/>
            <person name="Lew H."/>
            <person name="Lin A."/>
            <person name="Lin D."/>
            <person name="Louis E.J."/>
            <person name="Marathe R."/>
            <person name="Messenguy F."/>
            <person name="Mewes H.-W."/>
            <person name="Mirtipati S."/>
            <person name="Moestl D."/>
            <person name="Mueller-Auer S."/>
            <person name="Namath A."/>
            <person name="Nentwich U."/>
            <person name="Oefner P."/>
            <person name="Pearson D."/>
            <person name="Petel F.X."/>
            <person name="Pohl T.M."/>
            <person name="Purnelle B."/>
            <person name="Rajandream M.A."/>
            <person name="Rechmann S."/>
            <person name="Rieger M."/>
            <person name="Riles L."/>
            <person name="Roberts D."/>
            <person name="Schaefer M."/>
            <person name="Scharfe M."/>
            <person name="Scherens B."/>
            <person name="Schramm S."/>
            <person name="Schroeder M."/>
            <person name="Sdicu A.-M."/>
            <person name="Tettelin H."/>
            <person name="Urrestarazu L.A."/>
            <person name="Ushinsky S."/>
            <person name="Vierendeels F."/>
            <person name="Vissers S."/>
            <person name="Voss H."/>
            <person name="Walsh S.V."/>
            <person name="Wambutt R."/>
            <person name="Wang Y."/>
            <person name="Wedler E."/>
            <person name="Wedler H."/>
            <person name="Winnett E."/>
            <person name="Zhong W.-W."/>
            <person name="Zollner A."/>
            <person name="Vo D.H."/>
            <person name="Hani J."/>
        </authorList>
    </citation>
    <scope>NUCLEOTIDE SEQUENCE [LARGE SCALE GENOMIC DNA]</scope>
    <source>
        <strain>ATCC 204508 / S288c</strain>
    </source>
</reference>
<reference key="2">
    <citation type="journal article" date="2014" name="G3 (Bethesda)">
        <title>The reference genome sequence of Saccharomyces cerevisiae: Then and now.</title>
        <authorList>
            <person name="Engel S.R."/>
            <person name="Dietrich F.S."/>
            <person name="Fisk D.G."/>
            <person name="Binkley G."/>
            <person name="Balakrishnan R."/>
            <person name="Costanzo M.C."/>
            <person name="Dwight S.S."/>
            <person name="Hitz B.C."/>
            <person name="Karra K."/>
            <person name="Nash R.S."/>
            <person name="Weng S."/>
            <person name="Wong E.D."/>
            <person name="Lloyd P."/>
            <person name="Skrzypek M.S."/>
            <person name="Miyasato S.R."/>
            <person name="Simison M."/>
            <person name="Cherry J.M."/>
        </authorList>
    </citation>
    <scope>GENOME REANNOTATION</scope>
    <source>
        <strain>ATCC 204508 / S288c</strain>
    </source>
</reference>
<reference key="3">
    <citation type="journal article" date="2007" name="Genome Res.">
        <title>Approaching a complete repository of sequence-verified protein-encoding clones for Saccharomyces cerevisiae.</title>
        <authorList>
            <person name="Hu Y."/>
            <person name="Rolfs A."/>
            <person name="Bhullar B."/>
            <person name="Murthy T.V.S."/>
            <person name="Zhu C."/>
            <person name="Berger M.F."/>
            <person name="Camargo A.A."/>
            <person name="Kelley F."/>
            <person name="McCarron S."/>
            <person name="Jepson D."/>
            <person name="Richardson A."/>
            <person name="Raphael J."/>
            <person name="Moreira D."/>
            <person name="Taycher E."/>
            <person name="Zuo D."/>
            <person name="Mohr S."/>
            <person name="Kane M.F."/>
            <person name="Williamson J."/>
            <person name="Simpson A.J.G."/>
            <person name="Bulyk M.L."/>
            <person name="Harlow E."/>
            <person name="Marsischky G."/>
            <person name="Kolodner R.D."/>
            <person name="LaBaer J."/>
        </authorList>
    </citation>
    <scope>NUCLEOTIDE SEQUENCE [GENOMIC DNA]</scope>
    <source>
        <strain>ATCC 204508 / S288c</strain>
    </source>
</reference>
<reference key="4">
    <citation type="journal article" date="1996" name="EMBO J.">
        <title>Delta- and zeta-COP, two coatomer subunits homologous to clathrin-associated proteins, are involved in ER retrieval.</title>
        <authorList>
            <person name="Cosson P."/>
            <person name="Demolliere C."/>
            <person name="Hennecke S."/>
            <person name="Duden R."/>
            <person name="Letourneur F."/>
        </authorList>
    </citation>
    <scope>CHARACTERIZATION</scope>
</reference>
<reference key="5">
    <citation type="journal article" date="1997" name="J. Biochem.">
        <title>Identification and functional characterization of yeast zeta-COP.</title>
        <authorList>
            <person name="Yamazaki S."/>
            <person name="Harashima S."/>
            <person name="Sakaguchi M."/>
            <person name="Mihara K."/>
        </authorList>
    </citation>
    <scope>FUNCTION</scope>
</reference>
<feature type="chain" id="PRO_0000193830" description="Coatomer subunit zeta">
    <location>
        <begin position="1"/>
        <end position="189"/>
    </location>
</feature>
<proteinExistence type="evidence at protein level"/>
<protein>
    <recommendedName>
        <fullName>Coatomer subunit zeta</fullName>
    </recommendedName>
    <alternativeName>
        <fullName>Zeta-coat protein</fullName>
        <shortName>Zeta-COP</shortName>
    </alternativeName>
</protein>
<evidence type="ECO:0000250" key="1"/>
<evidence type="ECO:0000269" key="2">
    <source>
    </source>
</evidence>
<evidence type="ECO:0000305" key="3"/>